<proteinExistence type="inferred from homology"/>
<gene>
    <name evidence="1" type="primary">plsY</name>
    <name type="ordered locus">LMOf2365_1302</name>
</gene>
<comment type="function">
    <text evidence="1">Catalyzes the transfer of an acyl group from acyl-phosphate (acyl-PO(4)) to glycerol-3-phosphate (G3P) to form lysophosphatidic acid (LPA). This enzyme utilizes acyl-phosphate as fatty acyl donor, but not acyl-CoA or acyl-ACP.</text>
</comment>
<comment type="catalytic activity">
    <reaction evidence="1">
        <text>an acyl phosphate + sn-glycerol 3-phosphate = a 1-acyl-sn-glycero-3-phosphate + phosphate</text>
        <dbReference type="Rhea" id="RHEA:34075"/>
        <dbReference type="ChEBI" id="CHEBI:43474"/>
        <dbReference type="ChEBI" id="CHEBI:57597"/>
        <dbReference type="ChEBI" id="CHEBI:57970"/>
        <dbReference type="ChEBI" id="CHEBI:59918"/>
        <dbReference type="EC" id="2.3.1.275"/>
    </reaction>
</comment>
<comment type="pathway">
    <text evidence="1">Lipid metabolism; phospholipid metabolism.</text>
</comment>
<comment type="subunit">
    <text evidence="1">Probably interacts with PlsX.</text>
</comment>
<comment type="subcellular location">
    <subcellularLocation>
        <location evidence="1">Cell membrane</location>
        <topology evidence="1">Multi-pass membrane protein</topology>
    </subcellularLocation>
</comment>
<comment type="similarity">
    <text evidence="1">Belongs to the PlsY family.</text>
</comment>
<reference key="1">
    <citation type="journal article" date="2004" name="Nucleic Acids Res.">
        <title>Whole genome comparisons of serotype 4b and 1/2a strains of the food-borne pathogen Listeria monocytogenes reveal new insights into the core genome components of this species.</title>
        <authorList>
            <person name="Nelson K.E."/>
            <person name="Fouts D.E."/>
            <person name="Mongodin E.F."/>
            <person name="Ravel J."/>
            <person name="DeBoy R.T."/>
            <person name="Kolonay J.F."/>
            <person name="Rasko D.A."/>
            <person name="Angiuoli S.V."/>
            <person name="Gill S.R."/>
            <person name="Paulsen I.T."/>
            <person name="Peterson J.D."/>
            <person name="White O."/>
            <person name="Nelson W.C."/>
            <person name="Nierman W.C."/>
            <person name="Beanan M.J."/>
            <person name="Brinkac L.M."/>
            <person name="Daugherty S.C."/>
            <person name="Dodson R.J."/>
            <person name="Durkin A.S."/>
            <person name="Madupu R."/>
            <person name="Haft D.H."/>
            <person name="Selengut J."/>
            <person name="Van Aken S.E."/>
            <person name="Khouri H.M."/>
            <person name="Fedorova N."/>
            <person name="Forberger H.A."/>
            <person name="Tran B."/>
            <person name="Kathariou S."/>
            <person name="Wonderling L.D."/>
            <person name="Uhlich G.A."/>
            <person name="Bayles D.O."/>
            <person name="Luchansky J.B."/>
            <person name="Fraser C.M."/>
        </authorList>
    </citation>
    <scope>NUCLEOTIDE SEQUENCE [LARGE SCALE GENOMIC DNA]</scope>
    <source>
        <strain>F2365</strain>
    </source>
</reference>
<accession>Q720D7</accession>
<organism>
    <name type="scientific">Listeria monocytogenes serotype 4b (strain F2365)</name>
    <dbReference type="NCBI Taxonomy" id="265669"/>
    <lineage>
        <taxon>Bacteria</taxon>
        <taxon>Bacillati</taxon>
        <taxon>Bacillota</taxon>
        <taxon>Bacilli</taxon>
        <taxon>Bacillales</taxon>
        <taxon>Listeriaceae</taxon>
        <taxon>Listeria</taxon>
    </lineage>
</organism>
<evidence type="ECO:0000255" key="1">
    <source>
        <dbReference type="HAMAP-Rule" id="MF_01043"/>
    </source>
</evidence>
<name>PLSY_LISMF</name>
<sequence>MTINLILLSLLAYVIGSIPSGLWIGKIFYKKDIRDFGSGNLGATNSFRVLGIKAGSIVTVMDILKGTVATLLPFFFQLNVDHHFWLLTGAFAIIGHSFPLFAGFRGGKAVATSAGVILAYAPLLFVAALVVFLVTLKLSKYVSLSSMIGALAALIISLFMGDWILIILVACIALFVIWRHRANITRIRNGEEPKIKWM</sequence>
<feature type="chain" id="PRO_0000188397" description="Glycerol-3-phosphate acyltransferase">
    <location>
        <begin position="1"/>
        <end position="198"/>
    </location>
</feature>
<feature type="transmembrane region" description="Helical" evidence="1">
    <location>
        <begin position="5"/>
        <end position="25"/>
    </location>
</feature>
<feature type="transmembrane region" description="Helical" evidence="1">
    <location>
        <begin position="56"/>
        <end position="76"/>
    </location>
</feature>
<feature type="transmembrane region" description="Helical" evidence="1">
    <location>
        <begin position="84"/>
        <end position="104"/>
    </location>
</feature>
<feature type="transmembrane region" description="Helical" evidence="1">
    <location>
        <begin position="114"/>
        <end position="134"/>
    </location>
</feature>
<feature type="transmembrane region" description="Helical" evidence="1">
    <location>
        <begin position="158"/>
        <end position="178"/>
    </location>
</feature>
<keyword id="KW-1003">Cell membrane</keyword>
<keyword id="KW-0444">Lipid biosynthesis</keyword>
<keyword id="KW-0443">Lipid metabolism</keyword>
<keyword id="KW-0472">Membrane</keyword>
<keyword id="KW-0594">Phospholipid biosynthesis</keyword>
<keyword id="KW-1208">Phospholipid metabolism</keyword>
<keyword id="KW-0808">Transferase</keyword>
<keyword id="KW-0812">Transmembrane</keyword>
<keyword id="KW-1133">Transmembrane helix</keyword>
<dbReference type="EC" id="2.3.1.275" evidence="1"/>
<dbReference type="EMBL" id="AE017262">
    <property type="protein sequence ID" value="AAT04077.1"/>
    <property type="molecule type" value="Genomic_DNA"/>
</dbReference>
<dbReference type="RefSeq" id="WP_003726698.1">
    <property type="nucleotide sequence ID" value="NC_002973.6"/>
</dbReference>
<dbReference type="SMR" id="Q720D7"/>
<dbReference type="KEGG" id="lmf:LMOf2365_1302"/>
<dbReference type="HOGENOM" id="CLU_081254_4_0_9"/>
<dbReference type="UniPathway" id="UPA00085"/>
<dbReference type="GO" id="GO:0005886">
    <property type="term" value="C:plasma membrane"/>
    <property type="evidence" value="ECO:0007669"/>
    <property type="project" value="UniProtKB-SubCell"/>
</dbReference>
<dbReference type="GO" id="GO:0043772">
    <property type="term" value="F:acyl-phosphate glycerol-3-phosphate acyltransferase activity"/>
    <property type="evidence" value="ECO:0007669"/>
    <property type="project" value="UniProtKB-UniRule"/>
</dbReference>
<dbReference type="GO" id="GO:0008654">
    <property type="term" value="P:phospholipid biosynthetic process"/>
    <property type="evidence" value="ECO:0007669"/>
    <property type="project" value="UniProtKB-UniRule"/>
</dbReference>
<dbReference type="HAMAP" id="MF_01043">
    <property type="entry name" value="PlsY"/>
    <property type="match status" value="1"/>
</dbReference>
<dbReference type="InterPro" id="IPR003811">
    <property type="entry name" value="G3P_acylTferase_PlsY"/>
</dbReference>
<dbReference type="NCBIfam" id="TIGR00023">
    <property type="entry name" value="glycerol-3-phosphate 1-O-acyltransferase PlsY"/>
    <property type="match status" value="1"/>
</dbReference>
<dbReference type="PANTHER" id="PTHR30309:SF0">
    <property type="entry name" value="GLYCEROL-3-PHOSPHATE ACYLTRANSFERASE-RELATED"/>
    <property type="match status" value="1"/>
</dbReference>
<dbReference type="PANTHER" id="PTHR30309">
    <property type="entry name" value="INNER MEMBRANE PROTEIN YGIH"/>
    <property type="match status" value="1"/>
</dbReference>
<dbReference type="Pfam" id="PF02660">
    <property type="entry name" value="G3P_acyltransf"/>
    <property type="match status" value="1"/>
</dbReference>
<dbReference type="SMART" id="SM01207">
    <property type="entry name" value="G3P_acyltransf"/>
    <property type="match status" value="1"/>
</dbReference>
<protein>
    <recommendedName>
        <fullName evidence="1">Glycerol-3-phosphate acyltransferase</fullName>
    </recommendedName>
    <alternativeName>
        <fullName evidence="1">Acyl-PO4 G3P acyltransferase</fullName>
    </alternativeName>
    <alternativeName>
        <fullName evidence="1">Acyl-phosphate--glycerol-3-phosphate acyltransferase</fullName>
    </alternativeName>
    <alternativeName>
        <fullName evidence="1">G3P acyltransferase</fullName>
        <shortName evidence="1">GPAT</shortName>
        <ecNumber evidence="1">2.3.1.275</ecNumber>
    </alternativeName>
    <alternativeName>
        <fullName evidence="1">Lysophosphatidic acid synthase</fullName>
        <shortName evidence="1">LPA synthase</shortName>
    </alternativeName>
</protein>